<organism>
    <name type="scientific">Clostridioides difficile (strain 630)</name>
    <name type="common">Peptoclostridium difficile</name>
    <dbReference type="NCBI Taxonomy" id="272563"/>
    <lineage>
        <taxon>Bacteria</taxon>
        <taxon>Bacillati</taxon>
        <taxon>Bacillota</taxon>
        <taxon>Clostridia</taxon>
        <taxon>Peptostreptococcales</taxon>
        <taxon>Peptostreptococcaceae</taxon>
        <taxon>Clostridioides</taxon>
    </lineage>
</organism>
<comment type="function">
    <text evidence="1">Could be involved in septation.</text>
</comment>
<comment type="similarity">
    <text evidence="1">Belongs to the SpoVG family.</text>
</comment>
<dbReference type="EMBL" id="AM180355">
    <property type="protein sequence ID" value="CAJ70420.1"/>
    <property type="molecule type" value="Genomic_DNA"/>
</dbReference>
<dbReference type="RefSeq" id="WP_003421453.1">
    <property type="nucleotide sequence ID" value="NZ_JAUPES010000009.1"/>
</dbReference>
<dbReference type="RefSeq" id="YP_001090037.1">
    <property type="nucleotide sequence ID" value="NC_009089.1"/>
</dbReference>
<dbReference type="SMR" id="Q181B5"/>
<dbReference type="STRING" id="272563.CD630_35160"/>
<dbReference type="EnsemblBacteria" id="CAJ70420">
    <property type="protein sequence ID" value="CAJ70420"/>
    <property type="gene ID" value="CD630_35160"/>
</dbReference>
<dbReference type="GeneID" id="66355978"/>
<dbReference type="KEGG" id="cdf:CD630_35160"/>
<dbReference type="KEGG" id="pdc:CDIF630_03830"/>
<dbReference type="PATRIC" id="fig|272563.120.peg.3716"/>
<dbReference type="eggNOG" id="COG2088">
    <property type="taxonomic scope" value="Bacteria"/>
</dbReference>
<dbReference type="OrthoDB" id="9796286at2"/>
<dbReference type="PhylomeDB" id="Q181B5"/>
<dbReference type="BioCyc" id="PDIF272563:G12WB-3697-MONOMER"/>
<dbReference type="Proteomes" id="UP000001978">
    <property type="component" value="Chromosome"/>
</dbReference>
<dbReference type="GO" id="GO:0000917">
    <property type="term" value="P:division septum assembly"/>
    <property type="evidence" value="ECO:0007669"/>
    <property type="project" value="UniProtKB-KW"/>
</dbReference>
<dbReference type="GO" id="GO:0030435">
    <property type="term" value="P:sporulation resulting in formation of a cellular spore"/>
    <property type="evidence" value="ECO:0007669"/>
    <property type="project" value="InterPro"/>
</dbReference>
<dbReference type="Gene3D" id="3.30.1120.40">
    <property type="entry name" value="Stage V sporulation protein G"/>
    <property type="match status" value="1"/>
</dbReference>
<dbReference type="HAMAP" id="MF_00819">
    <property type="entry name" value="SpoVG"/>
    <property type="match status" value="1"/>
</dbReference>
<dbReference type="InterPro" id="IPR007170">
    <property type="entry name" value="SpoVG"/>
</dbReference>
<dbReference type="InterPro" id="IPR036751">
    <property type="entry name" value="SpoVG_sf"/>
</dbReference>
<dbReference type="NCBIfam" id="NF009749">
    <property type="entry name" value="PRK13259.1"/>
    <property type="match status" value="1"/>
</dbReference>
<dbReference type="PANTHER" id="PTHR38429">
    <property type="entry name" value="SEPTATION PROTEIN SPOVG-RELATED"/>
    <property type="match status" value="1"/>
</dbReference>
<dbReference type="PANTHER" id="PTHR38429:SF1">
    <property type="entry name" value="SEPTATION PROTEIN SPOVG-RELATED"/>
    <property type="match status" value="1"/>
</dbReference>
<dbReference type="Pfam" id="PF04026">
    <property type="entry name" value="SpoVG"/>
    <property type="match status" value="1"/>
</dbReference>
<dbReference type="SUPFAM" id="SSF160537">
    <property type="entry name" value="SpoVG-like"/>
    <property type="match status" value="1"/>
</dbReference>
<sequence>MKITDVRVRKLTEEGKMKCIVSITFDNLFVVHDIKVIEGHNGLFIAMPSRKVGEGNFRDIAHPINAEMRQVLEDAVLQAYHEALVQWEVAAE</sequence>
<keyword id="KW-0131">Cell cycle</keyword>
<keyword id="KW-0132">Cell division</keyword>
<keyword id="KW-1185">Reference proteome</keyword>
<keyword id="KW-0717">Septation</keyword>
<evidence type="ECO:0000255" key="1">
    <source>
        <dbReference type="HAMAP-Rule" id="MF_00819"/>
    </source>
</evidence>
<accession>Q181B5</accession>
<feature type="chain" id="PRO_1000062428" description="Putative septation protein SpoVG">
    <location>
        <begin position="1"/>
        <end position="92"/>
    </location>
</feature>
<name>SP5G_CLOD6</name>
<proteinExistence type="inferred from homology"/>
<protein>
    <recommendedName>
        <fullName evidence="1">Putative septation protein SpoVG</fullName>
    </recommendedName>
</protein>
<gene>
    <name evidence="1" type="primary">spoVG</name>
    <name type="ordered locus">CD630_35160</name>
</gene>
<reference key="1">
    <citation type="journal article" date="2006" name="Nat. Genet.">
        <title>The multidrug-resistant human pathogen Clostridium difficile has a highly mobile, mosaic genome.</title>
        <authorList>
            <person name="Sebaihia M."/>
            <person name="Wren B.W."/>
            <person name="Mullany P."/>
            <person name="Fairweather N.F."/>
            <person name="Minton N."/>
            <person name="Stabler R."/>
            <person name="Thomson N.R."/>
            <person name="Roberts A.P."/>
            <person name="Cerdeno-Tarraga A.M."/>
            <person name="Wang H."/>
            <person name="Holden M.T.G."/>
            <person name="Wright A."/>
            <person name="Churcher C."/>
            <person name="Quail M.A."/>
            <person name="Baker S."/>
            <person name="Bason N."/>
            <person name="Brooks K."/>
            <person name="Chillingworth T."/>
            <person name="Cronin A."/>
            <person name="Davis P."/>
            <person name="Dowd L."/>
            <person name="Fraser A."/>
            <person name="Feltwell T."/>
            <person name="Hance Z."/>
            <person name="Holroyd S."/>
            <person name="Jagels K."/>
            <person name="Moule S."/>
            <person name="Mungall K."/>
            <person name="Price C."/>
            <person name="Rabbinowitsch E."/>
            <person name="Sharp S."/>
            <person name="Simmonds M."/>
            <person name="Stevens K."/>
            <person name="Unwin L."/>
            <person name="Whithead S."/>
            <person name="Dupuy B."/>
            <person name="Dougan G."/>
            <person name="Barrell B."/>
            <person name="Parkhill J."/>
        </authorList>
    </citation>
    <scope>NUCLEOTIDE SEQUENCE [LARGE SCALE GENOMIC DNA]</scope>
    <source>
        <strain>630</strain>
    </source>
</reference>